<sequence length="225" mass="25913">MKYTLTRVNTKNSISKKYPLRSLKKTSDPIKKQIKNNIFFGTISKYMQYIMNWGRKNSLWPYNFGLSCCYVEMVSAFTSIHDISRFGSEVLRTSPRQADFMVIAGTPFIKMAPVIQRLYDLMLEPKWVISMGSCANSGGMYDIYSVVQGVDKFLPVDIYIPGCPPRPEAYIHAITLLQKAISKERRPLSWIVGEQGVYKYNMLSEKEEKNKKRISIINIDSEDSF</sequence>
<organism>
    <name type="scientific">Buchnera aphidicola subsp. Cinara cedri (strain Cc)</name>
    <dbReference type="NCBI Taxonomy" id="372461"/>
    <lineage>
        <taxon>Bacteria</taxon>
        <taxon>Pseudomonadati</taxon>
        <taxon>Pseudomonadota</taxon>
        <taxon>Gammaproteobacteria</taxon>
        <taxon>Enterobacterales</taxon>
        <taxon>Erwiniaceae</taxon>
        <taxon>Buchnera</taxon>
    </lineage>
</organism>
<name>NUOB_BUCCC</name>
<comment type="function">
    <text evidence="1">NDH-1 shuttles electrons from NADH, via FMN and iron-sulfur (Fe-S) centers, to quinones in the respiratory chain. The immediate electron acceptor for the enzyme in this species is believed to be ubiquinone. Couples the redox reaction to proton translocation (for every two electrons transferred, four hydrogen ions are translocated across the cytoplasmic membrane), and thus conserves the redox energy in a proton gradient.</text>
</comment>
<comment type="catalytic activity">
    <reaction evidence="1">
        <text>a quinone + NADH + 5 H(+)(in) = a quinol + NAD(+) + 4 H(+)(out)</text>
        <dbReference type="Rhea" id="RHEA:57888"/>
        <dbReference type="ChEBI" id="CHEBI:15378"/>
        <dbReference type="ChEBI" id="CHEBI:24646"/>
        <dbReference type="ChEBI" id="CHEBI:57540"/>
        <dbReference type="ChEBI" id="CHEBI:57945"/>
        <dbReference type="ChEBI" id="CHEBI:132124"/>
    </reaction>
</comment>
<comment type="cofactor">
    <cofactor evidence="1">
        <name>[4Fe-4S] cluster</name>
        <dbReference type="ChEBI" id="CHEBI:49883"/>
    </cofactor>
    <text evidence="1">Binds 1 [4Fe-4S] cluster.</text>
</comment>
<comment type="subunit">
    <text evidence="1">NDH-1 is composed of 13 different subunits. Subunits NuoB, CD, E, F, and G constitute the peripheral sector of the complex.</text>
</comment>
<comment type="subcellular location">
    <subcellularLocation>
        <location evidence="1">Cell membrane</location>
        <topology evidence="1">Peripheral membrane protein</topology>
        <orientation evidence="1">Cytoplasmic side</orientation>
    </subcellularLocation>
</comment>
<comment type="similarity">
    <text evidence="1">Belongs to the complex I 20 kDa subunit family.</text>
</comment>
<evidence type="ECO:0000255" key="1">
    <source>
        <dbReference type="HAMAP-Rule" id="MF_01356"/>
    </source>
</evidence>
<reference key="1">
    <citation type="journal article" date="2006" name="Science">
        <title>A small microbial genome: the end of a long symbiotic relationship?</title>
        <authorList>
            <person name="Perez-Brocal V."/>
            <person name="Gil R."/>
            <person name="Ramos S."/>
            <person name="Lamelas A."/>
            <person name="Postigo M."/>
            <person name="Michelena J.M."/>
            <person name="Silva F.J."/>
            <person name="Moya A."/>
            <person name="Latorre A."/>
        </authorList>
    </citation>
    <scope>NUCLEOTIDE SEQUENCE [LARGE SCALE GENOMIC DNA]</scope>
    <source>
        <strain>Cc</strain>
    </source>
</reference>
<protein>
    <recommendedName>
        <fullName evidence="1">NADH-quinone oxidoreductase subunit B</fullName>
        <ecNumber evidence="1">7.1.1.-</ecNumber>
    </recommendedName>
    <alternativeName>
        <fullName evidence="1">NADH dehydrogenase I subunit B</fullName>
    </alternativeName>
    <alternativeName>
        <fullName evidence="1">NDH-1 subunit B</fullName>
    </alternativeName>
</protein>
<gene>
    <name evidence="1" type="primary">nuoB</name>
    <name type="ordered locus">BCc_098</name>
</gene>
<proteinExistence type="inferred from homology"/>
<dbReference type="EC" id="7.1.1.-" evidence="1"/>
<dbReference type="EMBL" id="CP000263">
    <property type="protein sequence ID" value="ABJ90575.1"/>
    <property type="molecule type" value="Genomic_DNA"/>
</dbReference>
<dbReference type="RefSeq" id="WP_011672494.1">
    <property type="nucleotide sequence ID" value="NC_008513.1"/>
</dbReference>
<dbReference type="SMR" id="Q057X4"/>
<dbReference type="STRING" id="372461.BCc_098"/>
<dbReference type="KEGG" id="bcc:BCc_098"/>
<dbReference type="eggNOG" id="COG0377">
    <property type="taxonomic scope" value="Bacteria"/>
</dbReference>
<dbReference type="HOGENOM" id="CLU_055737_7_3_6"/>
<dbReference type="OrthoDB" id="9786737at2"/>
<dbReference type="Proteomes" id="UP000000669">
    <property type="component" value="Chromosome"/>
</dbReference>
<dbReference type="GO" id="GO:0005886">
    <property type="term" value="C:plasma membrane"/>
    <property type="evidence" value="ECO:0007669"/>
    <property type="project" value="UniProtKB-SubCell"/>
</dbReference>
<dbReference type="GO" id="GO:0045271">
    <property type="term" value="C:respiratory chain complex I"/>
    <property type="evidence" value="ECO:0007669"/>
    <property type="project" value="TreeGrafter"/>
</dbReference>
<dbReference type="GO" id="GO:0051539">
    <property type="term" value="F:4 iron, 4 sulfur cluster binding"/>
    <property type="evidence" value="ECO:0007669"/>
    <property type="project" value="UniProtKB-KW"/>
</dbReference>
<dbReference type="GO" id="GO:0005506">
    <property type="term" value="F:iron ion binding"/>
    <property type="evidence" value="ECO:0007669"/>
    <property type="project" value="UniProtKB-UniRule"/>
</dbReference>
<dbReference type="GO" id="GO:0008137">
    <property type="term" value="F:NADH dehydrogenase (ubiquinone) activity"/>
    <property type="evidence" value="ECO:0007669"/>
    <property type="project" value="InterPro"/>
</dbReference>
<dbReference type="GO" id="GO:0050136">
    <property type="term" value="F:NADH:ubiquinone reductase (non-electrogenic) activity"/>
    <property type="evidence" value="ECO:0007669"/>
    <property type="project" value="UniProtKB-UniRule"/>
</dbReference>
<dbReference type="GO" id="GO:0048038">
    <property type="term" value="F:quinone binding"/>
    <property type="evidence" value="ECO:0007669"/>
    <property type="project" value="UniProtKB-KW"/>
</dbReference>
<dbReference type="GO" id="GO:0009060">
    <property type="term" value="P:aerobic respiration"/>
    <property type="evidence" value="ECO:0007669"/>
    <property type="project" value="TreeGrafter"/>
</dbReference>
<dbReference type="GO" id="GO:0015990">
    <property type="term" value="P:electron transport coupled proton transport"/>
    <property type="evidence" value="ECO:0007669"/>
    <property type="project" value="TreeGrafter"/>
</dbReference>
<dbReference type="FunFam" id="3.40.50.12280:FF:000002">
    <property type="entry name" value="NADH-quinone oxidoreductase subunit B"/>
    <property type="match status" value="1"/>
</dbReference>
<dbReference type="Gene3D" id="3.40.50.12280">
    <property type="match status" value="1"/>
</dbReference>
<dbReference type="HAMAP" id="MF_01356">
    <property type="entry name" value="NDH1_NuoB"/>
    <property type="match status" value="1"/>
</dbReference>
<dbReference type="InterPro" id="IPR006137">
    <property type="entry name" value="NADH_UbQ_OxRdtase-like_20kDa"/>
</dbReference>
<dbReference type="InterPro" id="IPR006138">
    <property type="entry name" value="NADH_UQ_OxRdtase_20Kd_su"/>
</dbReference>
<dbReference type="NCBIfam" id="TIGR01957">
    <property type="entry name" value="nuoB_fam"/>
    <property type="match status" value="1"/>
</dbReference>
<dbReference type="NCBIfam" id="NF005012">
    <property type="entry name" value="PRK06411.1"/>
    <property type="match status" value="1"/>
</dbReference>
<dbReference type="PANTHER" id="PTHR11995">
    <property type="entry name" value="NADH DEHYDROGENASE"/>
    <property type="match status" value="1"/>
</dbReference>
<dbReference type="PANTHER" id="PTHR11995:SF14">
    <property type="entry name" value="NADH DEHYDROGENASE [UBIQUINONE] IRON-SULFUR PROTEIN 7, MITOCHONDRIAL"/>
    <property type="match status" value="1"/>
</dbReference>
<dbReference type="Pfam" id="PF01058">
    <property type="entry name" value="Oxidored_q6"/>
    <property type="match status" value="1"/>
</dbReference>
<dbReference type="SUPFAM" id="SSF56770">
    <property type="entry name" value="HydA/Nqo6-like"/>
    <property type="match status" value="1"/>
</dbReference>
<dbReference type="PROSITE" id="PS01150">
    <property type="entry name" value="COMPLEX1_20K"/>
    <property type="match status" value="1"/>
</dbReference>
<accession>Q057X4</accession>
<feature type="chain" id="PRO_0000376158" description="NADH-quinone oxidoreductase subunit B">
    <location>
        <begin position="1"/>
        <end position="225"/>
    </location>
</feature>
<feature type="binding site" evidence="1">
    <location>
        <position position="68"/>
    </location>
    <ligand>
        <name>[4Fe-4S] cluster</name>
        <dbReference type="ChEBI" id="CHEBI:49883"/>
    </ligand>
</feature>
<feature type="binding site" evidence="1">
    <location>
        <position position="69"/>
    </location>
    <ligand>
        <name>[4Fe-4S] cluster</name>
        <dbReference type="ChEBI" id="CHEBI:49883"/>
    </ligand>
</feature>
<feature type="binding site" evidence="1">
    <location>
        <position position="134"/>
    </location>
    <ligand>
        <name>[4Fe-4S] cluster</name>
        <dbReference type="ChEBI" id="CHEBI:49883"/>
    </ligand>
</feature>
<feature type="binding site" evidence="1">
    <location>
        <position position="163"/>
    </location>
    <ligand>
        <name>[4Fe-4S] cluster</name>
        <dbReference type="ChEBI" id="CHEBI:49883"/>
    </ligand>
</feature>
<keyword id="KW-0004">4Fe-4S</keyword>
<keyword id="KW-1003">Cell membrane</keyword>
<keyword id="KW-0408">Iron</keyword>
<keyword id="KW-0411">Iron-sulfur</keyword>
<keyword id="KW-0472">Membrane</keyword>
<keyword id="KW-0479">Metal-binding</keyword>
<keyword id="KW-0520">NAD</keyword>
<keyword id="KW-0874">Quinone</keyword>
<keyword id="KW-1185">Reference proteome</keyword>
<keyword id="KW-1278">Translocase</keyword>
<keyword id="KW-0813">Transport</keyword>
<keyword id="KW-0830">Ubiquinone</keyword>